<proteinExistence type="inferred from homology"/>
<reference key="1">
    <citation type="journal article" date="2007" name="PLoS ONE">
        <title>Genome sequencing shows that European isolates of Francisella tularensis subspecies tularensis are almost identical to US laboratory strain Schu S4.</title>
        <authorList>
            <person name="Chaudhuri R.R."/>
            <person name="Ren C.-P."/>
            <person name="Desmond L."/>
            <person name="Vincent G.A."/>
            <person name="Silman N.J."/>
            <person name="Brehm J.K."/>
            <person name="Elmore M.J."/>
            <person name="Hudson M.J."/>
            <person name="Forsman M."/>
            <person name="Isherwood K.E."/>
            <person name="Gurycova D."/>
            <person name="Minton N.P."/>
            <person name="Titball R.W."/>
            <person name="Pallen M.J."/>
            <person name="Vipond R."/>
        </authorList>
    </citation>
    <scope>NUCLEOTIDE SEQUENCE [LARGE SCALE GENOMIC DNA]</scope>
    <source>
        <strain>FSC 198</strain>
    </source>
</reference>
<name>MURD_FRAT1</name>
<protein>
    <recommendedName>
        <fullName evidence="1">UDP-N-acetylmuramoylalanine--D-glutamate ligase</fullName>
        <ecNumber evidence="1">6.3.2.9</ecNumber>
    </recommendedName>
    <alternativeName>
        <fullName evidence="1">D-glutamic acid-adding enzyme</fullName>
    </alternativeName>
    <alternativeName>
        <fullName evidence="1">UDP-N-acetylmuramoyl-L-alanyl-D-glutamate synthetase</fullName>
    </alternativeName>
</protein>
<dbReference type="EC" id="6.3.2.9" evidence="1"/>
<dbReference type="EMBL" id="AM286280">
    <property type="protein sequence ID" value="CAL08467.1"/>
    <property type="molecule type" value="Genomic_DNA"/>
</dbReference>
<dbReference type="RefSeq" id="WP_003020220.1">
    <property type="nucleotide sequence ID" value="NC_008245.1"/>
</dbReference>
<dbReference type="SMR" id="Q14J05"/>
<dbReference type="KEGG" id="ftf:FTF0451"/>
<dbReference type="HOGENOM" id="CLU_032540_1_0_6"/>
<dbReference type="UniPathway" id="UPA00219"/>
<dbReference type="GO" id="GO:0005737">
    <property type="term" value="C:cytoplasm"/>
    <property type="evidence" value="ECO:0007669"/>
    <property type="project" value="UniProtKB-SubCell"/>
</dbReference>
<dbReference type="GO" id="GO:0005524">
    <property type="term" value="F:ATP binding"/>
    <property type="evidence" value="ECO:0007669"/>
    <property type="project" value="UniProtKB-UniRule"/>
</dbReference>
<dbReference type="GO" id="GO:0008764">
    <property type="term" value="F:UDP-N-acetylmuramoylalanine-D-glutamate ligase activity"/>
    <property type="evidence" value="ECO:0007669"/>
    <property type="project" value="UniProtKB-UniRule"/>
</dbReference>
<dbReference type="GO" id="GO:0051301">
    <property type="term" value="P:cell division"/>
    <property type="evidence" value="ECO:0007669"/>
    <property type="project" value="UniProtKB-KW"/>
</dbReference>
<dbReference type="GO" id="GO:0071555">
    <property type="term" value="P:cell wall organization"/>
    <property type="evidence" value="ECO:0007669"/>
    <property type="project" value="UniProtKB-KW"/>
</dbReference>
<dbReference type="GO" id="GO:0009252">
    <property type="term" value="P:peptidoglycan biosynthetic process"/>
    <property type="evidence" value="ECO:0007669"/>
    <property type="project" value="UniProtKB-UniRule"/>
</dbReference>
<dbReference type="GO" id="GO:0008360">
    <property type="term" value="P:regulation of cell shape"/>
    <property type="evidence" value="ECO:0007669"/>
    <property type="project" value="UniProtKB-KW"/>
</dbReference>
<dbReference type="Gene3D" id="3.90.190.20">
    <property type="entry name" value="Mur ligase, C-terminal domain"/>
    <property type="match status" value="1"/>
</dbReference>
<dbReference type="Gene3D" id="3.40.1190.10">
    <property type="entry name" value="Mur-like, catalytic domain"/>
    <property type="match status" value="1"/>
</dbReference>
<dbReference type="HAMAP" id="MF_00639">
    <property type="entry name" value="MurD"/>
    <property type="match status" value="1"/>
</dbReference>
<dbReference type="InterPro" id="IPR036565">
    <property type="entry name" value="Mur-like_cat_sf"/>
</dbReference>
<dbReference type="InterPro" id="IPR004101">
    <property type="entry name" value="Mur_ligase_C"/>
</dbReference>
<dbReference type="InterPro" id="IPR036615">
    <property type="entry name" value="Mur_ligase_C_dom_sf"/>
</dbReference>
<dbReference type="InterPro" id="IPR013221">
    <property type="entry name" value="Mur_ligase_cen"/>
</dbReference>
<dbReference type="InterPro" id="IPR005762">
    <property type="entry name" value="MurD"/>
</dbReference>
<dbReference type="NCBIfam" id="TIGR01087">
    <property type="entry name" value="murD"/>
    <property type="match status" value="1"/>
</dbReference>
<dbReference type="PANTHER" id="PTHR43692">
    <property type="entry name" value="UDP-N-ACETYLMURAMOYLALANINE--D-GLUTAMATE LIGASE"/>
    <property type="match status" value="1"/>
</dbReference>
<dbReference type="PANTHER" id="PTHR43692:SF1">
    <property type="entry name" value="UDP-N-ACETYLMURAMOYLALANINE--D-GLUTAMATE LIGASE"/>
    <property type="match status" value="1"/>
</dbReference>
<dbReference type="Pfam" id="PF02875">
    <property type="entry name" value="Mur_ligase_C"/>
    <property type="match status" value="1"/>
</dbReference>
<dbReference type="Pfam" id="PF08245">
    <property type="entry name" value="Mur_ligase_M"/>
    <property type="match status" value="1"/>
</dbReference>
<dbReference type="SUPFAM" id="SSF53623">
    <property type="entry name" value="MurD-like peptide ligases, catalytic domain"/>
    <property type="match status" value="1"/>
</dbReference>
<dbReference type="SUPFAM" id="SSF53244">
    <property type="entry name" value="MurD-like peptide ligases, peptide-binding domain"/>
    <property type="match status" value="1"/>
</dbReference>
<organism>
    <name type="scientific">Francisella tularensis subsp. tularensis (strain FSC 198)</name>
    <dbReference type="NCBI Taxonomy" id="393115"/>
    <lineage>
        <taxon>Bacteria</taxon>
        <taxon>Pseudomonadati</taxon>
        <taxon>Pseudomonadota</taxon>
        <taxon>Gammaproteobacteria</taxon>
        <taxon>Thiotrichales</taxon>
        <taxon>Francisellaceae</taxon>
        <taxon>Francisella</taxon>
    </lineage>
</organism>
<accession>Q14J05</accession>
<comment type="function">
    <text evidence="1">Cell wall formation. Catalyzes the addition of glutamate to the nucleotide precursor UDP-N-acetylmuramoyl-L-alanine (UMA).</text>
</comment>
<comment type="catalytic activity">
    <reaction evidence="1">
        <text>UDP-N-acetyl-alpha-D-muramoyl-L-alanine + D-glutamate + ATP = UDP-N-acetyl-alpha-D-muramoyl-L-alanyl-D-glutamate + ADP + phosphate + H(+)</text>
        <dbReference type="Rhea" id="RHEA:16429"/>
        <dbReference type="ChEBI" id="CHEBI:15378"/>
        <dbReference type="ChEBI" id="CHEBI:29986"/>
        <dbReference type="ChEBI" id="CHEBI:30616"/>
        <dbReference type="ChEBI" id="CHEBI:43474"/>
        <dbReference type="ChEBI" id="CHEBI:83898"/>
        <dbReference type="ChEBI" id="CHEBI:83900"/>
        <dbReference type="ChEBI" id="CHEBI:456216"/>
        <dbReference type="EC" id="6.3.2.9"/>
    </reaction>
</comment>
<comment type="pathway">
    <text evidence="1">Cell wall biogenesis; peptidoglycan biosynthesis.</text>
</comment>
<comment type="subcellular location">
    <subcellularLocation>
        <location evidence="1">Cytoplasm</location>
    </subcellularLocation>
</comment>
<comment type="similarity">
    <text evidence="1">Belongs to the MurCDEF family.</text>
</comment>
<sequence length="416" mass="46825">MFSFYFNDNKITKLLMVGYGSTGKSVCDFLANFIDITVDISQNDDEFVNYDLNSYDLITVSPGIPLNKSPYRALTKFKDKIVSDIDIFYQYIKDTKAKTIAVTGSNGKSTVVTMTDFVLKDLGYKSILVGNIGTPALNKIGEKFDYCVVEVSSFQINLFNCVRFDLGCIINVSPDHLDRYQNFEQYKQSKLNLAKFSNDFFVYDVHNGIKYAGEYQIIRGAIYRNSTKLLDIVETKLFGEHNLENIIVVLNILDRLGLDINQAIDSIKKFKGLEHRCKIVKKVNSTTYINDSKGTNVGATIAALNSITNSKNIILLLGGVAKGGDFSLMIKSLDKYVKYVYIYGADKEYIESYIKGYCKYQLCNNMKQAFELSSQKANSNEIVLLSPACASFDEFSGYAQRGEVFQNLVAQLEQKS</sequence>
<keyword id="KW-0067">ATP-binding</keyword>
<keyword id="KW-0131">Cell cycle</keyword>
<keyword id="KW-0132">Cell division</keyword>
<keyword id="KW-0133">Cell shape</keyword>
<keyword id="KW-0961">Cell wall biogenesis/degradation</keyword>
<keyword id="KW-0963">Cytoplasm</keyword>
<keyword id="KW-0436">Ligase</keyword>
<keyword id="KW-0547">Nucleotide-binding</keyword>
<keyword id="KW-0573">Peptidoglycan synthesis</keyword>
<feature type="chain" id="PRO_0000257191" description="UDP-N-acetylmuramoylalanine--D-glutamate ligase">
    <location>
        <begin position="1"/>
        <end position="416"/>
    </location>
</feature>
<feature type="binding site" evidence="1">
    <location>
        <begin position="104"/>
        <end position="110"/>
    </location>
    <ligand>
        <name>ATP</name>
        <dbReference type="ChEBI" id="CHEBI:30616"/>
    </ligand>
</feature>
<evidence type="ECO:0000255" key="1">
    <source>
        <dbReference type="HAMAP-Rule" id="MF_00639"/>
    </source>
</evidence>
<gene>
    <name evidence="1" type="primary">murD</name>
    <name type="ordered locus">FTF0451</name>
</gene>